<gene>
    <name type="primary">Csnk1g2</name>
    <name type="synonym">Ck1g2</name>
</gene>
<comment type="function">
    <text evidence="1 3 7 8">Serine/threonine-protein kinase. Casein kinases are operationally defined by their preferential utilization of acidic proteins such as caseins as substrates. It can phosphorylate a large number of proteins. Participates in Wnt signaling (By similarity). Phosphorylates MTA1 (PubMed:15077195). Phosphorylates COL4A3BP/CERT and SMAD3. SMAD3 phosphorylation promotes its ligand-dependent ubiquitination and subsequent proteasome degradation, thus inhibiting SMAD3-mediated TGF-beta responses. Hyperphosphorylation of the serine-repeat motif of COL4A3BP/CERT leads to its inactivation by dissociation from the Golgi complex, thus down-regulating ER-to-Golgi transport of ceramide and sphingomyelin synthesis. Triggers PER1 proteasomal degradation probably through phosphorylation (By similarity). Involved in brain development and vesicular trafficking and neurotransmitter releasing from small synaptic vesicles. Regulates fast synaptic transmission mediated by glutamate (PubMed:16014721). Involved in regulation of reactive oxygen species (ROS) levels (By similarity).</text>
</comment>
<comment type="catalytic activity">
    <reaction>
        <text>L-seryl-[protein] + ATP = O-phospho-L-seryl-[protein] + ADP + H(+)</text>
        <dbReference type="Rhea" id="RHEA:17989"/>
        <dbReference type="Rhea" id="RHEA-COMP:9863"/>
        <dbReference type="Rhea" id="RHEA-COMP:11604"/>
        <dbReference type="ChEBI" id="CHEBI:15378"/>
        <dbReference type="ChEBI" id="CHEBI:29999"/>
        <dbReference type="ChEBI" id="CHEBI:30616"/>
        <dbReference type="ChEBI" id="CHEBI:83421"/>
        <dbReference type="ChEBI" id="CHEBI:456216"/>
        <dbReference type="EC" id="2.7.11.1"/>
    </reaction>
</comment>
<comment type="catalytic activity">
    <reaction>
        <text>L-threonyl-[protein] + ATP = O-phospho-L-threonyl-[protein] + ADP + H(+)</text>
        <dbReference type="Rhea" id="RHEA:46608"/>
        <dbReference type="Rhea" id="RHEA-COMP:11060"/>
        <dbReference type="Rhea" id="RHEA-COMP:11605"/>
        <dbReference type="ChEBI" id="CHEBI:15378"/>
        <dbReference type="ChEBI" id="CHEBI:30013"/>
        <dbReference type="ChEBI" id="CHEBI:30616"/>
        <dbReference type="ChEBI" id="CHEBI:61977"/>
        <dbReference type="ChEBI" id="CHEBI:456216"/>
        <dbReference type="EC" id="2.7.11.1"/>
    </reaction>
</comment>
<comment type="activity regulation">
    <text evidence="7">Stimulated by estrogen.</text>
</comment>
<comment type="subunit">
    <text evidence="2 3 7">Monomer (By similarity). Interacts with MTA1 (short isoform) in the cytoplasm (PubMed:15077195). Interacts with SMAD3 (By similarity). Interacts with DUOXA2 (By similarity).</text>
</comment>
<comment type="subcellular location">
    <subcellularLocation>
        <location evidence="3">Cytoplasm</location>
        <location evidence="3">Cell cortex</location>
    </subcellularLocation>
    <subcellularLocation>
        <location evidence="3">Cytoplasm</location>
    </subcellularLocation>
</comment>
<comment type="tissue specificity">
    <text evidence="8">Expressed in both the striatum and the neocortex.</text>
</comment>
<comment type="domain">
    <text evidence="3">The phospho-regulated basic and hydrophobic (PRBH) motif is sufficient and important for interaction with phospholipids permitting cortical localization. Phosphorylation of the PRBH motif by aPKC inhibits the association of the protein with the cortical membrane.</text>
</comment>
<comment type="PTM">
    <text evidence="3">Autophosphorylated. Phosphorylated by aPKC which promotes dissociation from the cell cortex.</text>
</comment>
<comment type="similarity">
    <text evidence="9">Belongs to the protein kinase superfamily. CK1 Ser/Thr protein kinase family. Casein kinase I subfamily.</text>
</comment>
<sequence>MDFDKKGGKGELEEGRRMSKTGTSRSNHGVRSSGTSSGVLMVGPNFRVGKKIGCGNFGELRLGKNLYTNEYVAIKLEPIKSRAPQLHLEYRFYKQLSTTEGVPQVYYFGPCGKYNAMVLELLGPSLEDLFDLCDRTFTLKTVLMIAIQLITRMEYVHTKSLIYRDVKPENFLVGRPGSKRQHSIHIIDFGLAKEYIDPETKKHIPYREHKSLTGTARYMSINTHLGKEQSRRDDLEALGHMFMYFLRGSLPWQGLKADTLKERYQKIGDTKRATPIEVLCESFPEEMATYLRYVRRLDFFEKPDYDYLRKLFTDLFDRSGYVFDYEYDWAGKPLPTPIGTVHPDVPSQPPHRDKAQLHTKNQALNSTNGELNTDDPTAGHSNAPIAAPAEVEVADETKCCCFFKRRKRKSLQRHK</sequence>
<dbReference type="EC" id="2.7.11.1"/>
<dbReference type="EMBL" id="AK077076">
    <property type="protein sequence ID" value="BAC36596.1"/>
    <property type="molecule type" value="mRNA"/>
</dbReference>
<dbReference type="EMBL" id="AK132871">
    <property type="protein sequence ID" value="BAE21399.1"/>
    <property type="molecule type" value="mRNA"/>
</dbReference>
<dbReference type="CCDS" id="CCDS48638.1"/>
<dbReference type="RefSeq" id="NP_001153063.1">
    <property type="nucleotide sequence ID" value="NM_001159591.1"/>
</dbReference>
<dbReference type="RefSeq" id="NP_598763.1">
    <property type="nucleotide sequence ID" value="NM_134002.2"/>
</dbReference>
<dbReference type="RefSeq" id="XP_006513074.1">
    <property type="nucleotide sequence ID" value="XM_006513011.3"/>
</dbReference>
<dbReference type="SMR" id="Q8BVP5"/>
<dbReference type="FunCoup" id="Q8BVP5">
    <property type="interactions" value="3180"/>
</dbReference>
<dbReference type="STRING" id="10090.ENSMUSP00000078706"/>
<dbReference type="iPTMnet" id="Q8BVP5"/>
<dbReference type="PhosphoSitePlus" id="Q8BVP5"/>
<dbReference type="SwissPalm" id="Q8BVP5"/>
<dbReference type="PaxDb" id="10090-ENSMUSP00000078706"/>
<dbReference type="PeptideAtlas" id="Q8BVP5"/>
<dbReference type="ProteomicsDB" id="269243"/>
<dbReference type="Pumba" id="Q8BVP5"/>
<dbReference type="Antibodypedia" id="22865">
    <property type="antibodies" value="487 antibodies from 31 providers"/>
</dbReference>
<dbReference type="DNASU" id="103236"/>
<dbReference type="Ensembl" id="ENSMUST00000085435.7">
    <property type="protein sequence ID" value="ENSMUSP00000082560.6"/>
    <property type="gene ID" value="ENSMUSG00000003345.17"/>
</dbReference>
<dbReference type="GeneID" id="103236"/>
<dbReference type="KEGG" id="mmu:103236"/>
<dbReference type="UCSC" id="uc007geb.2">
    <property type="organism name" value="mouse"/>
</dbReference>
<dbReference type="AGR" id="MGI:1920014"/>
<dbReference type="CTD" id="1455"/>
<dbReference type="MGI" id="MGI:1920014">
    <property type="gene designation" value="Csnk1g2"/>
</dbReference>
<dbReference type="VEuPathDB" id="HostDB:ENSMUSG00000003345"/>
<dbReference type="eggNOG" id="KOG1165">
    <property type="taxonomic scope" value="Eukaryota"/>
</dbReference>
<dbReference type="GeneTree" id="ENSGT00940000156470"/>
<dbReference type="HOGENOM" id="CLU_019279_2_0_1"/>
<dbReference type="InParanoid" id="Q8BVP5"/>
<dbReference type="OMA" id="EFDWTHK"/>
<dbReference type="OrthoDB" id="5800476at2759"/>
<dbReference type="PhylomeDB" id="Q8BVP5"/>
<dbReference type="BioGRID-ORCS" id="103236">
    <property type="hits" value="2 hits in 79 CRISPR screens"/>
</dbReference>
<dbReference type="ChiTaRS" id="Csnk1g2">
    <property type="organism name" value="mouse"/>
</dbReference>
<dbReference type="PRO" id="PR:Q8BVP5"/>
<dbReference type="Proteomes" id="UP000000589">
    <property type="component" value="Chromosome 10"/>
</dbReference>
<dbReference type="RNAct" id="Q8BVP5">
    <property type="molecule type" value="protein"/>
</dbReference>
<dbReference type="Bgee" id="ENSMUSG00000003345">
    <property type="expression patterns" value="Expressed in seminiferous tubule of testis and 273 other cell types or tissues"/>
</dbReference>
<dbReference type="ExpressionAtlas" id="Q8BVP5">
    <property type="expression patterns" value="baseline and differential"/>
</dbReference>
<dbReference type="GO" id="GO:0005938">
    <property type="term" value="C:cell cortex"/>
    <property type="evidence" value="ECO:0007669"/>
    <property type="project" value="UniProtKB-SubCell"/>
</dbReference>
<dbReference type="GO" id="GO:0005524">
    <property type="term" value="F:ATP binding"/>
    <property type="evidence" value="ECO:0007669"/>
    <property type="project" value="UniProtKB-KW"/>
</dbReference>
<dbReference type="GO" id="GO:0106310">
    <property type="term" value="F:protein serine kinase activity"/>
    <property type="evidence" value="ECO:0007669"/>
    <property type="project" value="RHEA"/>
</dbReference>
<dbReference type="GO" id="GO:0004674">
    <property type="term" value="F:protein serine/threonine kinase activity"/>
    <property type="evidence" value="ECO:0007669"/>
    <property type="project" value="UniProtKB-KW"/>
</dbReference>
<dbReference type="GO" id="GO:0016055">
    <property type="term" value="P:Wnt signaling pathway"/>
    <property type="evidence" value="ECO:0007669"/>
    <property type="project" value="UniProtKB-KW"/>
</dbReference>
<dbReference type="CDD" id="cd14126">
    <property type="entry name" value="STKc_CK1_gamma"/>
    <property type="match status" value="1"/>
</dbReference>
<dbReference type="FunFam" id="1.10.510.10:FF:001113">
    <property type="entry name" value="Casein kinase 1 gamma 2"/>
    <property type="match status" value="1"/>
</dbReference>
<dbReference type="FunFam" id="3.30.200.20:FF:000018">
    <property type="entry name" value="Casein kinase I isoform gamma-1"/>
    <property type="match status" value="1"/>
</dbReference>
<dbReference type="Gene3D" id="3.30.200.20">
    <property type="entry name" value="Phosphorylase Kinase, domain 1"/>
    <property type="match status" value="1"/>
</dbReference>
<dbReference type="Gene3D" id="1.10.510.10">
    <property type="entry name" value="Transferase(Phosphotransferase) domain 1"/>
    <property type="match status" value="1"/>
</dbReference>
<dbReference type="InterPro" id="IPR022247">
    <property type="entry name" value="Casein_kinase-1_gamma_C"/>
</dbReference>
<dbReference type="InterPro" id="IPR050235">
    <property type="entry name" value="CK1_Ser-Thr_kinase"/>
</dbReference>
<dbReference type="InterPro" id="IPR011009">
    <property type="entry name" value="Kinase-like_dom_sf"/>
</dbReference>
<dbReference type="InterPro" id="IPR000719">
    <property type="entry name" value="Prot_kinase_dom"/>
</dbReference>
<dbReference type="InterPro" id="IPR017441">
    <property type="entry name" value="Protein_kinase_ATP_BS"/>
</dbReference>
<dbReference type="InterPro" id="IPR008271">
    <property type="entry name" value="Ser/Thr_kinase_AS"/>
</dbReference>
<dbReference type="PANTHER" id="PTHR11909">
    <property type="entry name" value="CASEIN KINASE-RELATED"/>
    <property type="match status" value="1"/>
</dbReference>
<dbReference type="Pfam" id="PF12605">
    <property type="entry name" value="CK1gamma_C"/>
    <property type="match status" value="1"/>
</dbReference>
<dbReference type="Pfam" id="PF00069">
    <property type="entry name" value="Pkinase"/>
    <property type="match status" value="1"/>
</dbReference>
<dbReference type="SMART" id="SM00220">
    <property type="entry name" value="S_TKc"/>
    <property type="match status" value="1"/>
</dbReference>
<dbReference type="SUPFAM" id="SSF56112">
    <property type="entry name" value="Protein kinase-like (PK-like)"/>
    <property type="match status" value="1"/>
</dbReference>
<dbReference type="PROSITE" id="PS00107">
    <property type="entry name" value="PROTEIN_KINASE_ATP"/>
    <property type="match status" value="1"/>
</dbReference>
<dbReference type="PROSITE" id="PS50011">
    <property type="entry name" value="PROTEIN_KINASE_DOM"/>
    <property type="match status" value="1"/>
</dbReference>
<dbReference type="PROSITE" id="PS00108">
    <property type="entry name" value="PROTEIN_KINASE_ST"/>
    <property type="match status" value="1"/>
</dbReference>
<reference key="1">
    <citation type="journal article" date="2005" name="Science">
        <title>The transcriptional landscape of the mammalian genome.</title>
        <authorList>
            <person name="Carninci P."/>
            <person name="Kasukawa T."/>
            <person name="Katayama S."/>
            <person name="Gough J."/>
            <person name="Frith M.C."/>
            <person name="Maeda N."/>
            <person name="Oyama R."/>
            <person name="Ravasi T."/>
            <person name="Lenhard B."/>
            <person name="Wells C."/>
            <person name="Kodzius R."/>
            <person name="Shimokawa K."/>
            <person name="Bajic V.B."/>
            <person name="Brenner S.E."/>
            <person name="Batalov S."/>
            <person name="Forrest A.R."/>
            <person name="Zavolan M."/>
            <person name="Davis M.J."/>
            <person name="Wilming L.G."/>
            <person name="Aidinis V."/>
            <person name="Allen J.E."/>
            <person name="Ambesi-Impiombato A."/>
            <person name="Apweiler R."/>
            <person name="Aturaliya R.N."/>
            <person name="Bailey T.L."/>
            <person name="Bansal M."/>
            <person name="Baxter L."/>
            <person name="Beisel K.W."/>
            <person name="Bersano T."/>
            <person name="Bono H."/>
            <person name="Chalk A.M."/>
            <person name="Chiu K.P."/>
            <person name="Choudhary V."/>
            <person name="Christoffels A."/>
            <person name="Clutterbuck D.R."/>
            <person name="Crowe M.L."/>
            <person name="Dalla E."/>
            <person name="Dalrymple B.P."/>
            <person name="de Bono B."/>
            <person name="Della Gatta G."/>
            <person name="di Bernardo D."/>
            <person name="Down T."/>
            <person name="Engstrom P."/>
            <person name="Fagiolini M."/>
            <person name="Faulkner G."/>
            <person name="Fletcher C.F."/>
            <person name="Fukushima T."/>
            <person name="Furuno M."/>
            <person name="Futaki S."/>
            <person name="Gariboldi M."/>
            <person name="Georgii-Hemming P."/>
            <person name="Gingeras T.R."/>
            <person name="Gojobori T."/>
            <person name="Green R.E."/>
            <person name="Gustincich S."/>
            <person name="Harbers M."/>
            <person name="Hayashi Y."/>
            <person name="Hensch T.K."/>
            <person name="Hirokawa N."/>
            <person name="Hill D."/>
            <person name="Huminiecki L."/>
            <person name="Iacono M."/>
            <person name="Ikeo K."/>
            <person name="Iwama A."/>
            <person name="Ishikawa T."/>
            <person name="Jakt M."/>
            <person name="Kanapin A."/>
            <person name="Katoh M."/>
            <person name="Kawasawa Y."/>
            <person name="Kelso J."/>
            <person name="Kitamura H."/>
            <person name="Kitano H."/>
            <person name="Kollias G."/>
            <person name="Krishnan S.P."/>
            <person name="Kruger A."/>
            <person name="Kummerfeld S.K."/>
            <person name="Kurochkin I.V."/>
            <person name="Lareau L.F."/>
            <person name="Lazarevic D."/>
            <person name="Lipovich L."/>
            <person name="Liu J."/>
            <person name="Liuni S."/>
            <person name="McWilliam S."/>
            <person name="Madan Babu M."/>
            <person name="Madera M."/>
            <person name="Marchionni L."/>
            <person name="Matsuda H."/>
            <person name="Matsuzawa S."/>
            <person name="Miki H."/>
            <person name="Mignone F."/>
            <person name="Miyake S."/>
            <person name="Morris K."/>
            <person name="Mottagui-Tabar S."/>
            <person name="Mulder N."/>
            <person name="Nakano N."/>
            <person name="Nakauchi H."/>
            <person name="Ng P."/>
            <person name="Nilsson R."/>
            <person name="Nishiguchi S."/>
            <person name="Nishikawa S."/>
            <person name="Nori F."/>
            <person name="Ohara O."/>
            <person name="Okazaki Y."/>
            <person name="Orlando V."/>
            <person name="Pang K.C."/>
            <person name="Pavan W.J."/>
            <person name="Pavesi G."/>
            <person name="Pesole G."/>
            <person name="Petrovsky N."/>
            <person name="Piazza S."/>
            <person name="Reed J."/>
            <person name="Reid J.F."/>
            <person name="Ring B.Z."/>
            <person name="Ringwald M."/>
            <person name="Rost B."/>
            <person name="Ruan Y."/>
            <person name="Salzberg S.L."/>
            <person name="Sandelin A."/>
            <person name="Schneider C."/>
            <person name="Schoenbach C."/>
            <person name="Sekiguchi K."/>
            <person name="Semple C.A."/>
            <person name="Seno S."/>
            <person name="Sessa L."/>
            <person name="Sheng Y."/>
            <person name="Shibata Y."/>
            <person name="Shimada H."/>
            <person name="Shimada K."/>
            <person name="Silva D."/>
            <person name="Sinclair B."/>
            <person name="Sperling S."/>
            <person name="Stupka E."/>
            <person name="Sugiura K."/>
            <person name="Sultana R."/>
            <person name="Takenaka Y."/>
            <person name="Taki K."/>
            <person name="Tammoja K."/>
            <person name="Tan S.L."/>
            <person name="Tang S."/>
            <person name="Taylor M.S."/>
            <person name="Tegner J."/>
            <person name="Teichmann S.A."/>
            <person name="Ueda H.R."/>
            <person name="van Nimwegen E."/>
            <person name="Verardo R."/>
            <person name="Wei C.L."/>
            <person name="Yagi K."/>
            <person name="Yamanishi H."/>
            <person name="Zabarovsky E."/>
            <person name="Zhu S."/>
            <person name="Zimmer A."/>
            <person name="Hide W."/>
            <person name="Bult C."/>
            <person name="Grimmond S.M."/>
            <person name="Teasdale R.D."/>
            <person name="Liu E.T."/>
            <person name="Brusic V."/>
            <person name="Quackenbush J."/>
            <person name="Wahlestedt C."/>
            <person name="Mattick J.S."/>
            <person name="Hume D.A."/>
            <person name="Kai C."/>
            <person name="Sasaki D."/>
            <person name="Tomaru Y."/>
            <person name="Fukuda S."/>
            <person name="Kanamori-Katayama M."/>
            <person name="Suzuki M."/>
            <person name="Aoki J."/>
            <person name="Arakawa T."/>
            <person name="Iida J."/>
            <person name="Imamura K."/>
            <person name="Itoh M."/>
            <person name="Kato T."/>
            <person name="Kawaji H."/>
            <person name="Kawagashira N."/>
            <person name="Kawashima T."/>
            <person name="Kojima M."/>
            <person name="Kondo S."/>
            <person name="Konno H."/>
            <person name="Nakano K."/>
            <person name="Ninomiya N."/>
            <person name="Nishio T."/>
            <person name="Okada M."/>
            <person name="Plessy C."/>
            <person name="Shibata K."/>
            <person name="Shiraki T."/>
            <person name="Suzuki S."/>
            <person name="Tagami M."/>
            <person name="Waki K."/>
            <person name="Watahiki A."/>
            <person name="Okamura-Oho Y."/>
            <person name="Suzuki H."/>
            <person name="Kawai J."/>
            <person name="Hayashizaki Y."/>
        </authorList>
    </citation>
    <scope>NUCLEOTIDE SEQUENCE [LARGE SCALE MRNA]</scope>
    <source>
        <strain>C57BL/6J</strain>
        <tissue>Testis</tissue>
    </source>
</reference>
<reference key="2">
    <citation type="journal article" date="2004" name="Oncogene">
        <title>Metastatic tumor antigen 1 short form (MTA1s) associates with casein kinase I-gamma2, an estrogen-responsive kinase.</title>
        <authorList>
            <person name="Mishra S.K."/>
            <person name="Yang Z."/>
            <person name="Mazumdar A."/>
            <person name="Talukder A.H."/>
            <person name="Larose L."/>
            <person name="Kumar R."/>
        </authorList>
    </citation>
    <scope>FUNCTION AS MTA1 KINASE</scope>
    <scope>INTERACTION WITH MTA1</scope>
    <scope>SUBCELLULAR LOCATION</scope>
    <scope>ACTIVITY REGULATION</scope>
</reference>
<reference key="3">
    <citation type="journal article" date="2005" name="J. Neurosci.">
        <title>Physiological role for casein kinase 1 in glutamatergic synaptic transmission.</title>
        <authorList>
            <person name="Chergui K."/>
            <person name="Svenningsson P."/>
            <person name="Greengard P."/>
        </authorList>
    </citation>
    <scope>FUNCTION IN SYNAPTIC TRANSMISSION</scope>
    <scope>TISSUE SPECIFICITY</scope>
</reference>
<protein>
    <recommendedName>
        <fullName>Casein kinase I isoform gamma-2</fullName>
        <shortName>CKI-gamma 2</shortName>
        <ecNumber>2.7.11.1</ecNumber>
    </recommendedName>
</protein>
<proteinExistence type="evidence at protein level"/>
<name>KC1G2_MOUSE</name>
<feature type="chain" id="PRO_0000192843" description="Casein kinase I isoform gamma-2">
    <location>
        <begin position="1"/>
        <end position="415"/>
    </location>
</feature>
<feature type="domain" description="Protein kinase" evidence="4">
    <location>
        <begin position="46"/>
        <end position="316"/>
    </location>
</feature>
<feature type="region of interest" description="Disordered" evidence="6">
    <location>
        <begin position="1"/>
        <end position="38"/>
    </location>
</feature>
<feature type="region of interest" description="Phospho-regulated basic and hydrophobic (PRBH) motif" evidence="3">
    <location>
        <begin position="369"/>
        <end position="415"/>
    </location>
</feature>
<feature type="compositionally biased region" description="Basic and acidic residues" evidence="6">
    <location>
        <begin position="1"/>
        <end position="17"/>
    </location>
</feature>
<feature type="compositionally biased region" description="Polar residues" evidence="6">
    <location>
        <begin position="20"/>
        <end position="38"/>
    </location>
</feature>
<feature type="active site" description="Proton acceptor" evidence="4 5">
    <location>
        <position position="165"/>
    </location>
</feature>
<feature type="binding site" evidence="4">
    <location>
        <begin position="52"/>
        <end position="60"/>
    </location>
    <ligand>
        <name>ATP</name>
        <dbReference type="ChEBI" id="CHEBI:30616"/>
    </ligand>
</feature>
<feature type="binding site" evidence="4">
    <location>
        <position position="75"/>
    </location>
    <ligand>
        <name>ATP</name>
        <dbReference type="ChEBI" id="CHEBI:30616"/>
    </ligand>
</feature>
<accession>Q8BVP5</accession>
<keyword id="KW-0067">ATP-binding</keyword>
<keyword id="KW-0963">Cytoplasm</keyword>
<keyword id="KW-0418">Kinase</keyword>
<keyword id="KW-0547">Nucleotide-binding</keyword>
<keyword id="KW-0597">Phosphoprotein</keyword>
<keyword id="KW-1185">Reference proteome</keyword>
<keyword id="KW-0723">Serine/threonine-protein kinase</keyword>
<keyword id="KW-0808">Transferase</keyword>
<keyword id="KW-0879">Wnt signaling pathway</keyword>
<organism>
    <name type="scientific">Mus musculus</name>
    <name type="common">Mouse</name>
    <dbReference type="NCBI Taxonomy" id="10090"/>
    <lineage>
        <taxon>Eukaryota</taxon>
        <taxon>Metazoa</taxon>
        <taxon>Chordata</taxon>
        <taxon>Craniata</taxon>
        <taxon>Vertebrata</taxon>
        <taxon>Euteleostomi</taxon>
        <taxon>Mammalia</taxon>
        <taxon>Eutheria</taxon>
        <taxon>Euarchontoglires</taxon>
        <taxon>Glires</taxon>
        <taxon>Rodentia</taxon>
        <taxon>Myomorpha</taxon>
        <taxon>Muroidea</taxon>
        <taxon>Muridae</taxon>
        <taxon>Murinae</taxon>
        <taxon>Mus</taxon>
        <taxon>Mus</taxon>
    </lineage>
</organism>
<evidence type="ECO:0000250" key="1">
    <source>
        <dbReference type="UniProtKB" id="P48729"/>
    </source>
</evidence>
<evidence type="ECO:0000250" key="2">
    <source>
        <dbReference type="UniProtKB" id="P48730"/>
    </source>
</evidence>
<evidence type="ECO:0000250" key="3">
    <source>
        <dbReference type="UniProtKB" id="P78368"/>
    </source>
</evidence>
<evidence type="ECO:0000255" key="4">
    <source>
        <dbReference type="PROSITE-ProRule" id="PRU00159"/>
    </source>
</evidence>
<evidence type="ECO:0000255" key="5">
    <source>
        <dbReference type="PROSITE-ProRule" id="PRU10027"/>
    </source>
</evidence>
<evidence type="ECO:0000256" key="6">
    <source>
        <dbReference type="SAM" id="MobiDB-lite"/>
    </source>
</evidence>
<evidence type="ECO:0000269" key="7">
    <source>
    </source>
</evidence>
<evidence type="ECO:0000269" key="8">
    <source>
    </source>
</evidence>
<evidence type="ECO:0000305" key="9"/>